<protein>
    <recommendedName>
        <fullName>Mediator of RNA polymerase II transcription subunit 27</fullName>
    </recommendedName>
    <alternativeName>
        <fullName>Cofactor required for Sp1 transcriptional activation subunit 8</fullName>
        <shortName>CRSP complex subunit 8</shortName>
    </alternativeName>
    <alternativeName>
        <fullName>Mediator complex subunit 27</fullName>
    </alternativeName>
</protein>
<reference key="1">
    <citation type="submission" date="2004-11" db="EMBL/GenBank/DDBJ databases">
        <authorList>
            <consortium name="The German cDNA consortium"/>
        </authorList>
    </citation>
    <scope>NUCLEOTIDE SEQUENCE [LARGE SCALE MRNA]</scope>
    <source>
        <tissue>Brain cortex</tissue>
    </source>
</reference>
<proteinExistence type="evidence at transcript level"/>
<comment type="function">
    <text evidence="1">Component of the Mediator complex, a coactivator involved in the regulated transcription of nearly all RNA polymerase II-dependent genes. Mediator functions as a bridge to convey information from gene-specific regulatory proteins to the basal RNA polymerase II transcription machinery. Mediator is recruited to promoters by direct interactions with regulatory proteins and serves as a scaffold for the assembly of a functional preinitiation complex with RNA polymerase II and the general transcription factors (By similarity).</text>
</comment>
<comment type="subunit">
    <text evidence="1">Component of the Mediator complex, which is composed of MED1, MED4, MED6, MED7, MED8, MED9, MED10, MED11, MED12, MED13, MED13L, MED14, MED15, MED16, MED17, MED18, MED19, MED20, MED21, MED22, MED23, MED24, MED25, MED26, MED27, MED29, MED30, MED31, CCNC, CDK8 and CDC2L6/CDK11. The MED12, MED13, CCNC and CDK8 subunits form a distinct module termed the CDK8 module. Mediator containing the CDK8 module is less active than Mediator lacking this module in supporting transcriptional activation. Individual preparations of the Mediator complex lacking one or more distinct subunits have been variously termed ARC, CRSP, DRIP, PC2, SMCC and TRAP (By similarity).</text>
</comment>
<comment type="subcellular location">
    <subcellularLocation>
        <location evidence="1">Nucleus</location>
    </subcellularLocation>
</comment>
<comment type="similarity">
    <text evidence="3">Belongs to the Mediator complex subunit 27 family.</text>
</comment>
<keyword id="KW-0010">Activator</keyword>
<keyword id="KW-0488">Methylation</keyword>
<keyword id="KW-0539">Nucleus</keyword>
<keyword id="KW-0597">Phosphoprotein</keyword>
<keyword id="KW-1185">Reference proteome</keyword>
<keyword id="KW-0804">Transcription</keyword>
<keyword id="KW-0805">Transcription regulation</keyword>
<dbReference type="EMBL" id="CR860386">
    <property type="protein sequence ID" value="CAH92512.1"/>
    <property type="molecule type" value="mRNA"/>
</dbReference>
<dbReference type="RefSeq" id="NP_001127559.1">
    <property type="nucleotide sequence ID" value="NM_001134087.1"/>
</dbReference>
<dbReference type="SMR" id="Q5R6U8"/>
<dbReference type="FunCoup" id="Q5R6U8">
    <property type="interactions" value="3316"/>
</dbReference>
<dbReference type="STRING" id="9601.ENSPPYP00000022097"/>
<dbReference type="Ensembl" id="ENSPPYT00000023006.3">
    <property type="protein sequence ID" value="ENSPPYP00000022097.2"/>
    <property type="gene ID" value="ENSPPYG00000019706.3"/>
</dbReference>
<dbReference type="GeneID" id="100174637"/>
<dbReference type="KEGG" id="pon:100174637"/>
<dbReference type="CTD" id="9442"/>
<dbReference type="eggNOG" id="ENOG502QS6H">
    <property type="taxonomic scope" value="Eukaryota"/>
</dbReference>
<dbReference type="GeneTree" id="ENSGT00390000012207"/>
<dbReference type="HOGENOM" id="CLU_056015_0_0_1"/>
<dbReference type="InParanoid" id="Q5R6U8"/>
<dbReference type="OMA" id="FHEDCRN"/>
<dbReference type="OrthoDB" id="1868004at2759"/>
<dbReference type="TreeFam" id="TF323728"/>
<dbReference type="Proteomes" id="UP000001595">
    <property type="component" value="Chromosome 9"/>
</dbReference>
<dbReference type="GO" id="GO:0016592">
    <property type="term" value="C:mediator complex"/>
    <property type="evidence" value="ECO:0007669"/>
    <property type="project" value="InterPro"/>
</dbReference>
<dbReference type="GO" id="GO:0003713">
    <property type="term" value="F:transcription coactivator activity"/>
    <property type="evidence" value="ECO:0007669"/>
    <property type="project" value="TreeGrafter"/>
</dbReference>
<dbReference type="GO" id="GO:0006357">
    <property type="term" value="P:regulation of transcription by RNA polymerase II"/>
    <property type="evidence" value="ECO:0007669"/>
    <property type="project" value="TreeGrafter"/>
</dbReference>
<dbReference type="InterPro" id="IPR021627">
    <property type="entry name" value="Mediator_Med27"/>
</dbReference>
<dbReference type="PANTHER" id="PTHR13130">
    <property type="entry name" value="34 KDA TRANSCRIPTIONAL CO-ACTIVATOR-RELATED"/>
    <property type="match status" value="1"/>
</dbReference>
<dbReference type="PANTHER" id="PTHR13130:SF4">
    <property type="entry name" value="MEDIATOR OF RNA POLYMERASE II TRANSCRIPTION SUBUNIT 27"/>
    <property type="match status" value="1"/>
</dbReference>
<dbReference type="Pfam" id="PF11571">
    <property type="entry name" value="Med27"/>
    <property type="match status" value="1"/>
</dbReference>
<accession>Q5R6U8</accession>
<organism>
    <name type="scientific">Pongo abelii</name>
    <name type="common">Sumatran orangutan</name>
    <name type="synonym">Pongo pygmaeus abelii</name>
    <dbReference type="NCBI Taxonomy" id="9601"/>
    <lineage>
        <taxon>Eukaryota</taxon>
        <taxon>Metazoa</taxon>
        <taxon>Chordata</taxon>
        <taxon>Craniata</taxon>
        <taxon>Vertebrata</taxon>
        <taxon>Euteleostomi</taxon>
        <taxon>Mammalia</taxon>
        <taxon>Eutheria</taxon>
        <taxon>Euarchontoglires</taxon>
        <taxon>Primates</taxon>
        <taxon>Haplorrhini</taxon>
        <taxon>Catarrhini</taxon>
        <taxon>Hominidae</taxon>
        <taxon>Pongo</taxon>
    </lineage>
</organism>
<feature type="chain" id="PRO_0000293487" description="Mediator of RNA polymerase II transcription subunit 27">
    <location>
        <begin position="1"/>
        <end position="311"/>
    </location>
</feature>
<feature type="modified residue" description="Phosphoserine" evidence="2">
    <location>
        <position position="132"/>
    </location>
</feature>
<feature type="modified residue" description="N6-methyllysine" evidence="2">
    <location>
        <position position="134"/>
    </location>
</feature>
<evidence type="ECO:0000250" key="1"/>
<evidence type="ECO:0000250" key="2">
    <source>
        <dbReference type="UniProtKB" id="Q6P2C8"/>
    </source>
</evidence>
<evidence type="ECO:0000305" key="3"/>
<sequence>MADVINVSVNLEAFSQAISAIQALRSSVSRVFDCLKDGMRNKETLEGREKAFIAHFQDNLHSVNRDLNELERLSNLVGKPSENHPLHNSGLLSLDPVQDKTPLYSQLLQAYKWSNKLQYHAGLASGLLNQQSLKRSANQMGVSAKRRPKAQPTTLVLPPQYVDDVISRIDRMFPEMSIHLSRPNGTSAMLLVTLGKVLKVIVVMRSLFIDRTIVKGYNENVYTEDGKLDIWSKSNYQVFQKVTDHATTALLHYQLPQMPDVVVRSFMTWLRSYIKLFQAPCQRCGKFLQDGLPPTWRDFRTLEAFHDTCRQ</sequence>
<name>MED27_PONAB</name>
<gene>
    <name type="primary">MED27</name>
    <name type="synonym">CRSP8</name>
</gene>